<proteinExistence type="inferred from homology"/>
<feature type="chain" id="PRO_1000047455" description="Glycine--tRNA ligase alpha subunit">
    <location>
        <begin position="1"/>
        <end position="290"/>
    </location>
</feature>
<evidence type="ECO:0000255" key="1">
    <source>
        <dbReference type="HAMAP-Rule" id="MF_00254"/>
    </source>
</evidence>
<accession>Q3A8N6</accession>
<protein>
    <recommendedName>
        <fullName evidence="1">Glycine--tRNA ligase alpha subunit</fullName>
        <ecNumber evidence="1">6.1.1.14</ecNumber>
    </recommendedName>
    <alternativeName>
        <fullName evidence="1">Glycyl-tRNA synthetase alpha subunit</fullName>
        <shortName evidence="1">GlyRS</shortName>
    </alternativeName>
</protein>
<organism>
    <name type="scientific">Syntrophotalea carbinolica (strain DSM 2380 / NBRC 103641 / GraBd1)</name>
    <name type="common">Pelobacter carbinolicus</name>
    <dbReference type="NCBI Taxonomy" id="338963"/>
    <lineage>
        <taxon>Bacteria</taxon>
        <taxon>Pseudomonadati</taxon>
        <taxon>Thermodesulfobacteriota</taxon>
        <taxon>Desulfuromonadia</taxon>
        <taxon>Desulfuromonadales</taxon>
        <taxon>Syntrophotaleaceae</taxon>
        <taxon>Syntrophotalea</taxon>
    </lineage>
</organism>
<keyword id="KW-0030">Aminoacyl-tRNA synthetase</keyword>
<keyword id="KW-0067">ATP-binding</keyword>
<keyword id="KW-0963">Cytoplasm</keyword>
<keyword id="KW-0436">Ligase</keyword>
<keyword id="KW-0547">Nucleotide-binding</keyword>
<keyword id="KW-0648">Protein biosynthesis</keyword>
<keyword id="KW-1185">Reference proteome</keyword>
<gene>
    <name evidence="1" type="primary">glyQ</name>
    <name type="ordered locus">Pcar_0598</name>
</gene>
<sequence>MNFQELILALQNYWAKQGCIIQQPYDMEKGAGTFNPATFLRVLGPEPWNVAYVEPSRRPTDGRYGENPNRLQHYYQFQVVMKPSPTNIQELYLDSLKSFGISPSRHDIRFVEDDWESPTLGAWGLGWEVWLDGMEITQFTYFQQVGGIDLKPVSAEITYGCERIAMYLQGVDNVYDLEWIDGIKYGDVHHQSEVEYSTYNFEEADAGMLFNLFDMYEKECSRLAKSQLVLPAYDYVLKASHAFNLLDARGAISVTERAHYIGRVRNLARLCAEGYVAQREKLGFPLIKGR</sequence>
<name>SYGA_SYNC1</name>
<dbReference type="EC" id="6.1.1.14" evidence="1"/>
<dbReference type="EMBL" id="CP000142">
    <property type="protein sequence ID" value="ABA87857.1"/>
    <property type="molecule type" value="Genomic_DNA"/>
</dbReference>
<dbReference type="RefSeq" id="WP_011340298.1">
    <property type="nucleotide sequence ID" value="NC_007498.2"/>
</dbReference>
<dbReference type="SMR" id="Q3A8N6"/>
<dbReference type="STRING" id="338963.Pcar_0598"/>
<dbReference type="KEGG" id="pca:Pcar_0598"/>
<dbReference type="eggNOG" id="COG0752">
    <property type="taxonomic scope" value="Bacteria"/>
</dbReference>
<dbReference type="HOGENOM" id="CLU_057066_1_0_7"/>
<dbReference type="OrthoDB" id="9802183at2"/>
<dbReference type="Proteomes" id="UP000002534">
    <property type="component" value="Chromosome"/>
</dbReference>
<dbReference type="GO" id="GO:0005829">
    <property type="term" value="C:cytosol"/>
    <property type="evidence" value="ECO:0007669"/>
    <property type="project" value="TreeGrafter"/>
</dbReference>
<dbReference type="GO" id="GO:0005524">
    <property type="term" value="F:ATP binding"/>
    <property type="evidence" value="ECO:0007669"/>
    <property type="project" value="UniProtKB-UniRule"/>
</dbReference>
<dbReference type="GO" id="GO:0004820">
    <property type="term" value="F:glycine-tRNA ligase activity"/>
    <property type="evidence" value="ECO:0007669"/>
    <property type="project" value="UniProtKB-UniRule"/>
</dbReference>
<dbReference type="GO" id="GO:0006426">
    <property type="term" value="P:glycyl-tRNA aminoacylation"/>
    <property type="evidence" value="ECO:0007669"/>
    <property type="project" value="UniProtKB-UniRule"/>
</dbReference>
<dbReference type="CDD" id="cd00733">
    <property type="entry name" value="GlyRS_alpha_core"/>
    <property type="match status" value="1"/>
</dbReference>
<dbReference type="FunFam" id="3.30.930.10:FF:000006">
    <property type="entry name" value="Glycine--tRNA ligase alpha subunit"/>
    <property type="match status" value="1"/>
</dbReference>
<dbReference type="Gene3D" id="3.30.930.10">
    <property type="entry name" value="Bira Bifunctional Protein, Domain 2"/>
    <property type="match status" value="1"/>
</dbReference>
<dbReference type="Gene3D" id="1.20.58.180">
    <property type="entry name" value="Class II aaRS and biotin synthetases, domain 2"/>
    <property type="match status" value="1"/>
</dbReference>
<dbReference type="HAMAP" id="MF_00254">
    <property type="entry name" value="Gly_tRNA_synth_alpha"/>
    <property type="match status" value="1"/>
</dbReference>
<dbReference type="InterPro" id="IPR045864">
    <property type="entry name" value="aa-tRNA-synth_II/BPL/LPL"/>
</dbReference>
<dbReference type="InterPro" id="IPR006194">
    <property type="entry name" value="Gly-tRNA-synth_heterodimer"/>
</dbReference>
<dbReference type="InterPro" id="IPR002310">
    <property type="entry name" value="Gly-tRNA_ligase_asu"/>
</dbReference>
<dbReference type="NCBIfam" id="TIGR00388">
    <property type="entry name" value="glyQ"/>
    <property type="match status" value="1"/>
</dbReference>
<dbReference type="NCBIfam" id="NF006827">
    <property type="entry name" value="PRK09348.1"/>
    <property type="match status" value="1"/>
</dbReference>
<dbReference type="PANTHER" id="PTHR30075:SF2">
    <property type="entry name" value="GLYCINE--TRNA LIGASE, CHLOROPLASTIC_MITOCHONDRIAL 2"/>
    <property type="match status" value="1"/>
</dbReference>
<dbReference type="PANTHER" id="PTHR30075">
    <property type="entry name" value="GLYCYL-TRNA SYNTHETASE"/>
    <property type="match status" value="1"/>
</dbReference>
<dbReference type="Pfam" id="PF02091">
    <property type="entry name" value="tRNA-synt_2e"/>
    <property type="match status" value="1"/>
</dbReference>
<dbReference type="PRINTS" id="PR01044">
    <property type="entry name" value="TRNASYNTHGA"/>
</dbReference>
<dbReference type="SUPFAM" id="SSF55681">
    <property type="entry name" value="Class II aaRS and biotin synthetases"/>
    <property type="match status" value="1"/>
</dbReference>
<dbReference type="PROSITE" id="PS50861">
    <property type="entry name" value="AA_TRNA_LIGASE_II_GLYAB"/>
    <property type="match status" value="1"/>
</dbReference>
<reference key="1">
    <citation type="submission" date="2005-10" db="EMBL/GenBank/DDBJ databases">
        <title>Complete sequence of Pelobacter carbinolicus DSM 2380.</title>
        <authorList>
            <person name="Copeland A."/>
            <person name="Lucas S."/>
            <person name="Lapidus A."/>
            <person name="Barry K."/>
            <person name="Detter J.C."/>
            <person name="Glavina T."/>
            <person name="Hammon N."/>
            <person name="Israni S."/>
            <person name="Pitluck S."/>
            <person name="Chertkov O."/>
            <person name="Schmutz J."/>
            <person name="Larimer F."/>
            <person name="Land M."/>
            <person name="Kyrpides N."/>
            <person name="Ivanova N."/>
            <person name="Richardson P."/>
        </authorList>
    </citation>
    <scope>NUCLEOTIDE SEQUENCE [LARGE SCALE GENOMIC DNA]</scope>
    <source>
        <strain>DSM 2380 / NBRC 103641 / GraBd1</strain>
    </source>
</reference>
<comment type="catalytic activity">
    <reaction evidence="1">
        <text>tRNA(Gly) + glycine + ATP = glycyl-tRNA(Gly) + AMP + diphosphate</text>
        <dbReference type="Rhea" id="RHEA:16013"/>
        <dbReference type="Rhea" id="RHEA-COMP:9664"/>
        <dbReference type="Rhea" id="RHEA-COMP:9683"/>
        <dbReference type="ChEBI" id="CHEBI:30616"/>
        <dbReference type="ChEBI" id="CHEBI:33019"/>
        <dbReference type="ChEBI" id="CHEBI:57305"/>
        <dbReference type="ChEBI" id="CHEBI:78442"/>
        <dbReference type="ChEBI" id="CHEBI:78522"/>
        <dbReference type="ChEBI" id="CHEBI:456215"/>
        <dbReference type="EC" id="6.1.1.14"/>
    </reaction>
</comment>
<comment type="subunit">
    <text evidence="1">Tetramer of two alpha and two beta subunits.</text>
</comment>
<comment type="subcellular location">
    <subcellularLocation>
        <location evidence="1">Cytoplasm</location>
    </subcellularLocation>
</comment>
<comment type="similarity">
    <text evidence="1">Belongs to the class-II aminoacyl-tRNA synthetase family.</text>
</comment>